<feature type="chain" id="PRO_0000368676" description="ATP synthase subunit b 2">
    <location>
        <begin position="1"/>
        <end position="175"/>
    </location>
</feature>
<feature type="transmembrane region" description="Helical" evidence="2">
    <location>
        <begin position="20"/>
        <end position="40"/>
    </location>
</feature>
<evidence type="ECO:0000250" key="1"/>
<evidence type="ECO:0000255" key="2">
    <source>
        <dbReference type="HAMAP-Rule" id="MF_01398"/>
    </source>
</evidence>
<protein>
    <recommendedName>
        <fullName evidence="2">ATP synthase subunit b 2</fullName>
    </recommendedName>
    <alternativeName>
        <fullName evidence="2">ATP synthase F(0) sector subunit b 2</fullName>
    </alternativeName>
    <alternativeName>
        <fullName evidence="2">ATPase subunit I 2</fullName>
    </alternativeName>
    <alternativeName>
        <fullName evidence="2">F-type ATPase subunit b 2</fullName>
        <shortName evidence="2">F-ATPase subunit b 2</shortName>
    </alternativeName>
</protein>
<organism>
    <name type="scientific">Prosthecochloris aestuarii (strain DSM 271 / SK 413)</name>
    <dbReference type="NCBI Taxonomy" id="290512"/>
    <lineage>
        <taxon>Bacteria</taxon>
        <taxon>Pseudomonadati</taxon>
        <taxon>Chlorobiota</taxon>
        <taxon>Chlorobiia</taxon>
        <taxon>Chlorobiales</taxon>
        <taxon>Chlorobiaceae</taxon>
        <taxon>Prosthecochloris</taxon>
    </lineage>
</organism>
<dbReference type="EMBL" id="CP001108">
    <property type="protein sequence ID" value="ACF47246.1"/>
    <property type="molecule type" value="Genomic_DNA"/>
</dbReference>
<dbReference type="RefSeq" id="WP_012506776.1">
    <property type="nucleotide sequence ID" value="NC_011059.1"/>
</dbReference>
<dbReference type="SMR" id="B4S6E4"/>
<dbReference type="STRING" id="290512.Paes_2245"/>
<dbReference type="KEGG" id="paa:Paes_2245"/>
<dbReference type="eggNOG" id="COG0711">
    <property type="taxonomic scope" value="Bacteria"/>
</dbReference>
<dbReference type="HOGENOM" id="CLU_079215_4_1_10"/>
<dbReference type="Proteomes" id="UP000002725">
    <property type="component" value="Chromosome"/>
</dbReference>
<dbReference type="GO" id="GO:0005886">
    <property type="term" value="C:plasma membrane"/>
    <property type="evidence" value="ECO:0007669"/>
    <property type="project" value="UniProtKB-SubCell"/>
</dbReference>
<dbReference type="GO" id="GO:0045259">
    <property type="term" value="C:proton-transporting ATP synthase complex"/>
    <property type="evidence" value="ECO:0007669"/>
    <property type="project" value="UniProtKB-KW"/>
</dbReference>
<dbReference type="GO" id="GO:0046933">
    <property type="term" value="F:proton-transporting ATP synthase activity, rotational mechanism"/>
    <property type="evidence" value="ECO:0007669"/>
    <property type="project" value="UniProtKB-UniRule"/>
</dbReference>
<dbReference type="GO" id="GO:0046961">
    <property type="term" value="F:proton-transporting ATPase activity, rotational mechanism"/>
    <property type="evidence" value="ECO:0007669"/>
    <property type="project" value="TreeGrafter"/>
</dbReference>
<dbReference type="CDD" id="cd06503">
    <property type="entry name" value="ATP-synt_Fo_b"/>
    <property type="match status" value="1"/>
</dbReference>
<dbReference type="Gene3D" id="1.20.5.620">
    <property type="entry name" value="F1F0 ATP synthase subunit B, membrane domain"/>
    <property type="match status" value="1"/>
</dbReference>
<dbReference type="HAMAP" id="MF_01398">
    <property type="entry name" value="ATP_synth_b_bprime"/>
    <property type="match status" value="1"/>
</dbReference>
<dbReference type="InterPro" id="IPR028987">
    <property type="entry name" value="ATP_synth_B-like_membr_sf"/>
</dbReference>
<dbReference type="InterPro" id="IPR002146">
    <property type="entry name" value="ATP_synth_b/b'su_bac/chlpt"/>
</dbReference>
<dbReference type="InterPro" id="IPR005864">
    <property type="entry name" value="ATP_synth_F0_bsu_bac"/>
</dbReference>
<dbReference type="InterPro" id="IPR050059">
    <property type="entry name" value="ATP_synthase_B_chain"/>
</dbReference>
<dbReference type="NCBIfam" id="TIGR01144">
    <property type="entry name" value="ATP_synt_b"/>
    <property type="match status" value="1"/>
</dbReference>
<dbReference type="NCBIfam" id="NF011042">
    <property type="entry name" value="PRK14472.1"/>
    <property type="match status" value="1"/>
</dbReference>
<dbReference type="PANTHER" id="PTHR33445:SF1">
    <property type="entry name" value="ATP SYNTHASE SUBUNIT B"/>
    <property type="match status" value="1"/>
</dbReference>
<dbReference type="PANTHER" id="PTHR33445">
    <property type="entry name" value="ATP SYNTHASE SUBUNIT B', CHLOROPLASTIC"/>
    <property type="match status" value="1"/>
</dbReference>
<dbReference type="Pfam" id="PF00430">
    <property type="entry name" value="ATP-synt_B"/>
    <property type="match status" value="1"/>
</dbReference>
<dbReference type="SUPFAM" id="SSF81573">
    <property type="entry name" value="F1F0 ATP synthase subunit B, membrane domain"/>
    <property type="match status" value="1"/>
</dbReference>
<keyword id="KW-0066">ATP synthesis</keyword>
<keyword id="KW-0997">Cell inner membrane</keyword>
<keyword id="KW-1003">Cell membrane</keyword>
<keyword id="KW-0138">CF(0)</keyword>
<keyword id="KW-0375">Hydrogen ion transport</keyword>
<keyword id="KW-0406">Ion transport</keyword>
<keyword id="KW-0472">Membrane</keyword>
<keyword id="KW-0812">Transmembrane</keyword>
<keyword id="KW-1133">Transmembrane helix</keyword>
<keyword id="KW-0813">Transport</keyword>
<name>ATPF2_PROA2</name>
<proteinExistence type="inferred from homology"/>
<reference key="1">
    <citation type="submission" date="2008-06" db="EMBL/GenBank/DDBJ databases">
        <title>Complete sequence of chromosome of Prosthecochloris aestuarii DSM 271.</title>
        <authorList>
            <consortium name="US DOE Joint Genome Institute"/>
            <person name="Lucas S."/>
            <person name="Copeland A."/>
            <person name="Lapidus A."/>
            <person name="Glavina del Rio T."/>
            <person name="Dalin E."/>
            <person name="Tice H."/>
            <person name="Bruce D."/>
            <person name="Goodwin L."/>
            <person name="Pitluck S."/>
            <person name="Schmutz J."/>
            <person name="Larimer F."/>
            <person name="Land M."/>
            <person name="Hauser L."/>
            <person name="Kyrpides N."/>
            <person name="Anderson I."/>
            <person name="Liu Z."/>
            <person name="Li T."/>
            <person name="Zhao F."/>
            <person name="Overmann J."/>
            <person name="Bryant D.A."/>
            <person name="Richardson P."/>
        </authorList>
    </citation>
    <scope>NUCLEOTIDE SEQUENCE [LARGE SCALE GENOMIC DNA]</scope>
    <source>
        <strain>DSM 271 / SK 413</strain>
    </source>
</reference>
<accession>B4S6E4</accession>
<gene>
    <name evidence="2" type="primary">atpF2</name>
    <name type="ordered locus">Paes_2245</name>
</gene>
<sequence>MLTSGIVILSGGLLDPNPGLIFWTAVTFVIVLLILKKFAWGPILGALEEREKAIQSSIDRAHTAKDEAEAALRKNKELLTKADAEAEKILREGKEYGEKLRADIVEKAHSEATKMISSAKEEIEQEKRRALDELRNEVADLAVQGAEKILMANLDADKQKAIVSSMIQDLSKHRN</sequence>
<comment type="function">
    <text evidence="2">F(1)F(0) ATP synthase produces ATP from ADP in the presence of a proton or sodium gradient. F-type ATPases consist of two structural domains, F(1) containing the extramembraneous catalytic core and F(0) containing the membrane proton channel, linked together by a central stalk and a peripheral stalk. During catalysis, ATP synthesis in the catalytic domain of F(1) is coupled via a rotary mechanism of the central stalk subunits to proton translocation.</text>
</comment>
<comment type="function">
    <text evidence="2">Component of the F(0) channel, it forms part of the peripheral stalk, linking F(1) to F(0).</text>
</comment>
<comment type="subunit">
    <text evidence="1">F-type ATPases have 2 components, F(1) - the catalytic core - and F(0) - the membrane proton channel. F(1) has five subunits: alpha(3), beta(3), gamma(1), delta(1), epsilon(1). F(0) has four main subunits: a(1), b(2) and c(10-14). The alpha and beta chains form an alternating ring which encloses part of the gamma chain. F(1) is attached to F(0) by a central stalk formed by the gamma and epsilon chains, while a peripheral stalk is formed by the delta and b chains (By similarity).</text>
</comment>
<comment type="subcellular location">
    <subcellularLocation>
        <location evidence="2">Cell inner membrane</location>
        <topology evidence="2">Single-pass membrane protein</topology>
    </subcellularLocation>
</comment>
<comment type="similarity">
    <text evidence="2">Belongs to the ATPase B chain family.</text>
</comment>